<comment type="function">
    <text evidence="1 6">Degrades chitin and chitotriose. May participate in the defense against nematodes, fungi and other pathogens. Plays a role in T-helper cell type 2 (Th2) immune response. Contributes to the response to IL-13 and inflammation in response to IL-13. Stimulates chemokine production by pulmonary epithelial cells. Protects lung epithelial cells against apoptosis and promotes phosphorylation of AKT1. Its function in the inflammatory response and in protecting cells against apoptosis is inhibited by allosamidin, suggesting that the function of this protein depends on carbohydrate binding (By similarity).</text>
</comment>
<comment type="catalytic activity">
    <reaction>
        <text>Random endo-hydrolysis of N-acetyl-beta-D-glucosaminide (1-&gt;4)-beta-linkages in chitin and chitodextrins.</text>
        <dbReference type="EC" id="3.2.1.14"/>
    </reaction>
</comment>
<comment type="biophysicochemical properties">
    <phDependence>
        <text>Optimum pH is 5.6-7.6.</text>
    </phDependence>
</comment>
<comment type="subunit">
    <text evidence="1">Interacts with EGFR.</text>
</comment>
<comment type="subcellular location">
    <subcellularLocation>
        <location evidence="1">Cytoplasm</location>
    </subcellularLocation>
    <subcellularLocation>
        <location evidence="6">Secreted</location>
    </subcellularLocation>
</comment>
<comment type="tissue specificity">
    <text evidence="6">Detected in liver and in serum.</text>
</comment>
<comment type="similarity">
    <text evidence="7">Belongs to the glycosyl hydrolase 18 family. Chitinase class II subfamily.</text>
</comment>
<feature type="signal peptide" evidence="6">
    <location>
        <begin position="1"/>
        <end position="21"/>
    </location>
</feature>
<feature type="chain" id="PRO_0000011943" description="Acidic mammalian chitinase">
    <location>
        <begin position="22"/>
        <end position="472"/>
    </location>
</feature>
<feature type="domain" description="GH18" evidence="4">
    <location>
        <begin position="22"/>
        <end position="390"/>
    </location>
</feature>
<feature type="domain" description="Chitin-binding type-2" evidence="3">
    <location>
        <begin position="423"/>
        <end position="472"/>
    </location>
</feature>
<feature type="region of interest" description="Disordered" evidence="5">
    <location>
        <begin position="397"/>
        <end position="421"/>
    </location>
</feature>
<feature type="compositionally biased region" description="Low complexity" evidence="5">
    <location>
        <begin position="400"/>
        <end position="421"/>
    </location>
</feature>
<feature type="active site" description="Proton donor" evidence="4">
    <location>
        <position position="140"/>
    </location>
</feature>
<feature type="binding site" evidence="4">
    <location>
        <begin position="70"/>
        <end position="71"/>
    </location>
    <ligand>
        <name>chitin</name>
        <dbReference type="ChEBI" id="CHEBI:17029"/>
    </ligand>
</feature>
<feature type="binding site" evidence="4">
    <location>
        <begin position="97"/>
        <end position="100"/>
    </location>
    <ligand>
        <name>chitin</name>
        <dbReference type="ChEBI" id="CHEBI:17029"/>
    </ligand>
</feature>
<feature type="binding site" evidence="4">
    <location>
        <position position="141"/>
    </location>
    <ligand>
        <name>chitin</name>
        <dbReference type="ChEBI" id="CHEBI:17029"/>
    </ligand>
</feature>
<feature type="binding site" evidence="4">
    <location>
        <begin position="210"/>
        <end position="213"/>
    </location>
    <ligand>
        <name>chitin</name>
        <dbReference type="ChEBI" id="CHEBI:17029"/>
    </ligand>
</feature>
<feature type="binding site" evidence="4">
    <location>
        <position position="360"/>
    </location>
    <ligand>
        <name>chitin</name>
        <dbReference type="ChEBI" id="CHEBI:17029"/>
    </ligand>
</feature>
<feature type="glycosylation site" description="N-linked (GlcNAc...) asparagine" evidence="2">
    <location>
        <position position="395"/>
    </location>
</feature>
<feature type="glycosylation site" description="N-linked (GlcNAc...) asparagine" evidence="2">
    <location>
        <position position="409"/>
    </location>
</feature>
<feature type="glycosylation site" description="N-linked (GlcNAc...) asparagine" evidence="2">
    <location>
        <position position="415"/>
    </location>
</feature>
<feature type="disulfide bond" evidence="4">
    <location>
        <begin position="26"/>
        <end position="51"/>
    </location>
</feature>
<feature type="disulfide bond" evidence="3">
    <location>
        <begin position="49"/>
        <end position="394"/>
    </location>
</feature>
<feature type="disulfide bond" evidence="3">
    <location>
        <begin position="307"/>
        <end position="372"/>
    </location>
</feature>
<feature type="disulfide bond" evidence="3">
    <location>
        <begin position="456"/>
        <end position="469"/>
    </location>
</feature>
<feature type="sequence conflict" description="In Ref. 2; AAI02932." evidence="7" ref="2">
    <original>F</original>
    <variation>S</variation>
    <location>
        <position position="144"/>
    </location>
</feature>
<keyword id="KW-0053">Apoptosis</keyword>
<keyword id="KW-0119">Carbohydrate metabolism</keyword>
<keyword id="KW-0146">Chitin degradation</keyword>
<keyword id="KW-0147">Chitin-binding</keyword>
<keyword id="KW-0963">Cytoplasm</keyword>
<keyword id="KW-0903">Direct protein sequencing</keyword>
<keyword id="KW-1015">Disulfide bond</keyword>
<keyword id="KW-0325">Glycoprotein</keyword>
<keyword id="KW-0326">Glycosidase</keyword>
<keyword id="KW-0378">Hydrolase</keyword>
<keyword id="KW-0391">Immunity</keyword>
<keyword id="KW-0395">Inflammatory response</keyword>
<keyword id="KW-0624">Polysaccharide degradation</keyword>
<keyword id="KW-1185">Reference proteome</keyword>
<keyword id="KW-0964">Secreted</keyword>
<keyword id="KW-0732">Signal</keyword>
<proteinExistence type="evidence at protein level"/>
<protein>
    <recommendedName>
        <fullName>Acidic mammalian chitinase</fullName>
        <shortName>AMCase</shortName>
        <ecNumber>3.2.1.14</ecNumber>
    </recommendedName>
    <alternativeName>
        <fullName>Chitin-binding protein b04</fullName>
        <shortName>CBPb04</shortName>
    </alternativeName>
</protein>
<sequence length="472" mass="52129">MAKLIFLTGLAFLLNAQLGSAYQLVCYFSNWAQYRPGLGSFKPDNIDPCLCTHLIYAFAGMSNSEITTIEWNDVALYSSFNDLKKKNSQLKILLAIGGWNFGTAPFTAMVATPENRKTFISSVIKFLHQYGFDGLDFDWEYPGFRGSPSQDKHLFTVLVQETREAFEQEAKQTNKPRLLVTAAVAAGISNIQAGYEIPQLSQYLDFIHVMTYDFHGSWEGYTGENSPLYKYPTDTGSNTYLNVEYAMNYWKKNGAPAEKLIIGFPAYGHNFILRDASNNGIGAPTSGAGPAGPYTREAGFWAYYEICAFLKDGATEAWDDSQNVPYAYKGTEWVGYDNVNSFRIKAQWLKENNFGGAMVWAIDLDDFTGTFCNQGKFPLINTLKDALGLKSATCNASTQSSEPNSSPGNESGSGNKSSSSEGRGYCAGKADGLYPVADNRNAFWNCVNGITYKQNCLTGLVFDTSCHCCNWA</sequence>
<organism>
    <name type="scientific">Bos taurus</name>
    <name type="common">Bovine</name>
    <dbReference type="NCBI Taxonomy" id="9913"/>
    <lineage>
        <taxon>Eukaryota</taxon>
        <taxon>Metazoa</taxon>
        <taxon>Chordata</taxon>
        <taxon>Craniata</taxon>
        <taxon>Vertebrata</taxon>
        <taxon>Euteleostomi</taxon>
        <taxon>Mammalia</taxon>
        <taxon>Eutheria</taxon>
        <taxon>Laurasiatheria</taxon>
        <taxon>Artiodactyla</taxon>
        <taxon>Ruminantia</taxon>
        <taxon>Pecora</taxon>
        <taxon>Bovidae</taxon>
        <taxon>Bovinae</taxon>
        <taxon>Bos</taxon>
    </lineage>
</organism>
<dbReference type="EC" id="3.2.1.14"/>
<dbReference type="EMBL" id="AB051629">
    <property type="protein sequence ID" value="BAB71805.1"/>
    <property type="molecule type" value="mRNA"/>
</dbReference>
<dbReference type="EMBL" id="BC102931">
    <property type="protein sequence ID" value="AAI02932.1"/>
    <property type="molecule type" value="mRNA"/>
</dbReference>
<dbReference type="RefSeq" id="NP_777124.1">
    <property type="nucleotide sequence ID" value="NM_174699.2"/>
</dbReference>
<dbReference type="SMR" id="Q95M17"/>
<dbReference type="FunCoup" id="Q95M17">
    <property type="interactions" value="80"/>
</dbReference>
<dbReference type="STRING" id="9913.ENSBTAP00000000324"/>
<dbReference type="CAZy" id="CBM14">
    <property type="family name" value="Carbohydrate-Binding Module Family 14"/>
</dbReference>
<dbReference type="CAZy" id="GH18">
    <property type="family name" value="Glycoside Hydrolase Family 18"/>
</dbReference>
<dbReference type="GlyCosmos" id="Q95M17">
    <property type="glycosylation" value="3 sites, No reported glycans"/>
</dbReference>
<dbReference type="GlyGen" id="Q95M17">
    <property type="glycosylation" value="3 sites"/>
</dbReference>
<dbReference type="PaxDb" id="9913-ENSBTAP00000000324"/>
<dbReference type="GeneID" id="282645"/>
<dbReference type="KEGG" id="bta:282645"/>
<dbReference type="CTD" id="27159"/>
<dbReference type="eggNOG" id="KOG2806">
    <property type="taxonomic scope" value="Eukaryota"/>
</dbReference>
<dbReference type="InParanoid" id="Q95M17"/>
<dbReference type="OrthoDB" id="76388at2759"/>
<dbReference type="Proteomes" id="UP000009136">
    <property type="component" value="Unplaced"/>
</dbReference>
<dbReference type="GO" id="GO:0005737">
    <property type="term" value="C:cytoplasm"/>
    <property type="evidence" value="ECO:0000250"/>
    <property type="project" value="UniProtKB"/>
</dbReference>
<dbReference type="GO" id="GO:0005576">
    <property type="term" value="C:extracellular region"/>
    <property type="evidence" value="ECO:0000318"/>
    <property type="project" value="GO_Central"/>
</dbReference>
<dbReference type="GO" id="GO:0005615">
    <property type="term" value="C:extracellular space"/>
    <property type="evidence" value="ECO:0000250"/>
    <property type="project" value="UniProtKB"/>
</dbReference>
<dbReference type="GO" id="GO:0008061">
    <property type="term" value="F:chitin binding"/>
    <property type="evidence" value="ECO:0007669"/>
    <property type="project" value="UniProtKB-KW"/>
</dbReference>
<dbReference type="GO" id="GO:0004568">
    <property type="term" value="F:chitinase activity"/>
    <property type="evidence" value="ECO:0000250"/>
    <property type="project" value="UniProtKB"/>
</dbReference>
<dbReference type="GO" id="GO:0008843">
    <property type="term" value="F:endochitinase activity"/>
    <property type="evidence" value="ECO:0007669"/>
    <property type="project" value="UniProtKB-EC"/>
</dbReference>
<dbReference type="GO" id="GO:0006915">
    <property type="term" value="P:apoptotic process"/>
    <property type="evidence" value="ECO:0007669"/>
    <property type="project" value="UniProtKB-KW"/>
</dbReference>
<dbReference type="GO" id="GO:0006032">
    <property type="term" value="P:chitin catabolic process"/>
    <property type="evidence" value="ECO:0000250"/>
    <property type="project" value="UniProtKB"/>
</dbReference>
<dbReference type="GO" id="GO:0002376">
    <property type="term" value="P:immune system process"/>
    <property type="evidence" value="ECO:0007669"/>
    <property type="project" value="UniProtKB-KW"/>
</dbReference>
<dbReference type="GO" id="GO:0000272">
    <property type="term" value="P:polysaccharide catabolic process"/>
    <property type="evidence" value="ECO:0007669"/>
    <property type="project" value="UniProtKB-KW"/>
</dbReference>
<dbReference type="GO" id="GO:0032722">
    <property type="term" value="P:positive regulation of chemokine production"/>
    <property type="evidence" value="ECO:0000250"/>
    <property type="project" value="UniProtKB"/>
</dbReference>
<dbReference type="GO" id="GO:0002532">
    <property type="term" value="P:production of molecular mediator involved in inflammatory response"/>
    <property type="evidence" value="ECO:0000250"/>
    <property type="project" value="UniProtKB"/>
</dbReference>
<dbReference type="CDD" id="cd02872">
    <property type="entry name" value="GH18_chitolectin_chitotriosidase"/>
    <property type="match status" value="1"/>
</dbReference>
<dbReference type="FunFam" id="2.170.140.10:FF:000001">
    <property type="entry name" value="Acidic mammalian chitinase"/>
    <property type="match status" value="1"/>
</dbReference>
<dbReference type="FunFam" id="3.20.20.80:FF:000007">
    <property type="entry name" value="Acidic mammalian chitinase"/>
    <property type="match status" value="1"/>
</dbReference>
<dbReference type="FunFam" id="3.20.20.80:FF:000081">
    <property type="entry name" value="Chitinase 1"/>
    <property type="match status" value="1"/>
</dbReference>
<dbReference type="FunFam" id="3.10.50.10:FF:000001">
    <property type="entry name" value="Chitinase 3-like 1"/>
    <property type="match status" value="1"/>
</dbReference>
<dbReference type="Gene3D" id="3.10.50.10">
    <property type="match status" value="1"/>
</dbReference>
<dbReference type="Gene3D" id="2.170.140.10">
    <property type="entry name" value="Chitin binding domain"/>
    <property type="match status" value="1"/>
</dbReference>
<dbReference type="Gene3D" id="3.20.20.80">
    <property type="entry name" value="Glycosidases"/>
    <property type="match status" value="1"/>
</dbReference>
<dbReference type="InterPro" id="IPR002557">
    <property type="entry name" value="Chitin-bd_dom"/>
</dbReference>
<dbReference type="InterPro" id="IPR036508">
    <property type="entry name" value="Chitin-bd_dom_sf"/>
</dbReference>
<dbReference type="InterPro" id="IPR011583">
    <property type="entry name" value="Chitinase_II/V-like_cat"/>
</dbReference>
<dbReference type="InterPro" id="IPR029070">
    <property type="entry name" value="Chitinase_insertion_sf"/>
</dbReference>
<dbReference type="InterPro" id="IPR001223">
    <property type="entry name" value="Glyco_hydro18_cat"/>
</dbReference>
<dbReference type="InterPro" id="IPR001579">
    <property type="entry name" value="Glyco_hydro_18_chit_AS"/>
</dbReference>
<dbReference type="InterPro" id="IPR017853">
    <property type="entry name" value="Glycoside_hydrolase_SF"/>
</dbReference>
<dbReference type="InterPro" id="IPR050314">
    <property type="entry name" value="Glycosyl_Hydrlase_18"/>
</dbReference>
<dbReference type="PANTHER" id="PTHR11177:SF188">
    <property type="entry name" value="ACIDIC MAMMALIAN CHITINASE"/>
    <property type="match status" value="1"/>
</dbReference>
<dbReference type="PANTHER" id="PTHR11177">
    <property type="entry name" value="CHITINASE"/>
    <property type="match status" value="1"/>
</dbReference>
<dbReference type="Pfam" id="PF01607">
    <property type="entry name" value="CBM_14"/>
    <property type="match status" value="1"/>
</dbReference>
<dbReference type="Pfam" id="PF00704">
    <property type="entry name" value="Glyco_hydro_18"/>
    <property type="match status" value="1"/>
</dbReference>
<dbReference type="SMART" id="SM00494">
    <property type="entry name" value="ChtBD2"/>
    <property type="match status" value="1"/>
</dbReference>
<dbReference type="SMART" id="SM00636">
    <property type="entry name" value="Glyco_18"/>
    <property type="match status" value="1"/>
</dbReference>
<dbReference type="SUPFAM" id="SSF51445">
    <property type="entry name" value="(Trans)glycosidases"/>
    <property type="match status" value="1"/>
</dbReference>
<dbReference type="SUPFAM" id="SSF54556">
    <property type="entry name" value="Chitinase insertion domain"/>
    <property type="match status" value="1"/>
</dbReference>
<dbReference type="SUPFAM" id="SSF57625">
    <property type="entry name" value="Invertebrate chitin-binding proteins"/>
    <property type="match status" value="1"/>
</dbReference>
<dbReference type="PROSITE" id="PS50940">
    <property type="entry name" value="CHIT_BIND_II"/>
    <property type="match status" value="1"/>
</dbReference>
<dbReference type="PROSITE" id="PS01095">
    <property type="entry name" value="GH18_1"/>
    <property type="match status" value="1"/>
</dbReference>
<dbReference type="PROSITE" id="PS51910">
    <property type="entry name" value="GH18_2"/>
    <property type="match status" value="1"/>
</dbReference>
<reference key="1">
    <citation type="journal article" date="2001" name="FEBS Lett.">
        <title>A novel serum chitinase that is expressed in bovine liver.</title>
        <authorList>
            <person name="Suzuki M."/>
            <person name="Morimatsu M."/>
            <person name="Yamashita T."/>
            <person name="Iwanaga T."/>
            <person name="Syuto B."/>
        </authorList>
    </citation>
    <scope>NUCLEOTIDE SEQUENCE [MRNA]</scope>
    <scope>PROTEIN SEQUENCE OF 22-40; 126-171 AND 312-350</scope>
    <scope>FUNCTION</scope>
    <scope>SUBCELLULAR LOCATION</scope>
    <scope>TISSUE SPECIFICITY</scope>
    <source>
        <tissue>Liver</tissue>
    </source>
</reference>
<reference key="2">
    <citation type="submission" date="2005-08" db="EMBL/GenBank/DDBJ databases">
        <authorList>
            <consortium name="NIH - Mammalian Gene Collection (MGC) project"/>
        </authorList>
    </citation>
    <scope>NUCLEOTIDE SEQUENCE [LARGE SCALE MRNA]</scope>
    <source>
        <strain>Hereford</strain>
        <tissue>Fetal liver</tissue>
    </source>
</reference>
<name>CHIA_BOVIN</name>
<gene>
    <name type="primary">CHIA</name>
</gene>
<accession>Q95M17</accession>
<accession>Q3SZE1</accession>
<evidence type="ECO:0000250" key="1"/>
<evidence type="ECO:0000255" key="2"/>
<evidence type="ECO:0000255" key="3">
    <source>
        <dbReference type="PROSITE-ProRule" id="PRU00144"/>
    </source>
</evidence>
<evidence type="ECO:0000255" key="4">
    <source>
        <dbReference type="PROSITE-ProRule" id="PRU01258"/>
    </source>
</evidence>
<evidence type="ECO:0000256" key="5">
    <source>
        <dbReference type="SAM" id="MobiDB-lite"/>
    </source>
</evidence>
<evidence type="ECO:0000269" key="6">
    <source>
    </source>
</evidence>
<evidence type="ECO:0000305" key="7"/>